<dbReference type="EC" id="2.1.1.170" evidence="1"/>
<dbReference type="EMBL" id="CP000890">
    <property type="protein sequence ID" value="ABX77374.1"/>
    <property type="molecule type" value="Genomic_DNA"/>
</dbReference>
<dbReference type="RefSeq" id="WP_010958542.1">
    <property type="nucleotide sequence ID" value="NC_010117.1"/>
</dbReference>
<dbReference type="SMR" id="A9NBA9"/>
<dbReference type="KEGG" id="cbs:COXBURSA331_A2126"/>
<dbReference type="HOGENOM" id="CLU_065341_2_0_6"/>
<dbReference type="GO" id="GO:0005829">
    <property type="term" value="C:cytosol"/>
    <property type="evidence" value="ECO:0007669"/>
    <property type="project" value="TreeGrafter"/>
</dbReference>
<dbReference type="GO" id="GO:0070043">
    <property type="term" value="F:rRNA (guanine-N7-)-methyltransferase activity"/>
    <property type="evidence" value="ECO:0007669"/>
    <property type="project" value="UniProtKB-UniRule"/>
</dbReference>
<dbReference type="CDD" id="cd02440">
    <property type="entry name" value="AdoMet_MTases"/>
    <property type="match status" value="1"/>
</dbReference>
<dbReference type="FunFam" id="3.40.50.150:FF:000682">
    <property type="entry name" value="Ribosomal RNA small subunit methyltransferase G"/>
    <property type="match status" value="1"/>
</dbReference>
<dbReference type="Gene3D" id="3.40.50.150">
    <property type="entry name" value="Vaccinia Virus protein VP39"/>
    <property type="match status" value="1"/>
</dbReference>
<dbReference type="HAMAP" id="MF_00074">
    <property type="entry name" value="16SrRNA_methyltr_G"/>
    <property type="match status" value="1"/>
</dbReference>
<dbReference type="InterPro" id="IPR003682">
    <property type="entry name" value="rRNA_ssu_MeTfrase_G"/>
</dbReference>
<dbReference type="InterPro" id="IPR029063">
    <property type="entry name" value="SAM-dependent_MTases_sf"/>
</dbReference>
<dbReference type="NCBIfam" id="TIGR00138">
    <property type="entry name" value="rsmG_gidB"/>
    <property type="match status" value="1"/>
</dbReference>
<dbReference type="PANTHER" id="PTHR31760">
    <property type="entry name" value="S-ADENOSYL-L-METHIONINE-DEPENDENT METHYLTRANSFERASES SUPERFAMILY PROTEIN"/>
    <property type="match status" value="1"/>
</dbReference>
<dbReference type="PANTHER" id="PTHR31760:SF0">
    <property type="entry name" value="S-ADENOSYL-L-METHIONINE-DEPENDENT METHYLTRANSFERASES SUPERFAMILY PROTEIN"/>
    <property type="match status" value="1"/>
</dbReference>
<dbReference type="Pfam" id="PF02527">
    <property type="entry name" value="GidB"/>
    <property type="match status" value="1"/>
</dbReference>
<dbReference type="PIRSF" id="PIRSF003078">
    <property type="entry name" value="GidB"/>
    <property type="match status" value="1"/>
</dbReference>
<dbReference type="SUPFAM" id="SSF53335">
    <property type="entry name" value="S-adenosyl-L-methionine-dependent methyltransferases"/>
    <property type="match status" value="1"/>
</dbReference>
<protein>
    <recommendedName>
        <fullName evidence="1">Ribosomal RNA small subunit methyltransferase G</fullName>
        <ecNumber evidence="1">2.1.1.170</ecNumber>
    </recommendedName>
    <alternativeName>
        <fullName evidence="1">16S rRNA 7-methylguanosine methyltransferase</fullName>
        <shortName evidence="1">16S rRNA m7G methyltransferase</shortName>
    </alternativeName>
</protein>
<name>RSMG_COXBR</name>
<comment type="function">
    <text evidence="1">Specifically methylates the N7 position of guanine in position 527 of 16S rRNA.</text>
</comment>
<comment type="catalytic activity">
    <reaction evidence="1">
        <text>guanosine(527) in 16S rRNA + S-adenosyl-L-methionine = N(7)-methylguanosine(527) in 16S rRNA + S-adenosyl-L-homocysteine</text>
        <dbReference type="Rhea" id="RHEA:42732"/>
        <dbReference type="Rhea" id="RHEA-COMP:10209"/>
        <dbReference type="Rhea" id="RHEA-COMP:10210"/>
        <dbReference type="ChEBI" id="CHEBI:57856"/>
        <dbReference type="ChEBI" id="CHEBI:59789"/>
        <dbReference type="ChEBI" id="CHEBI:74269"/>
        <dbReference type="ChEBI" id="CHEBI:74480"/>
        <dbReference type="EC" id="2.1.1.170"/>
    </reaction>
</comment>
<comment type="subcellular location">
    <subcellularLocation>
        <location evidence="1">Cytoplasm</location>
    </subcellularLocation>
</comment>
<comment type="similarity">
    <text evidence="1">Belongs to the methyltransferase superfamily. RNA methyltransferase RsmG family.</text>
</comment>
<accession>A9NBA9</accession>
<keyword id="KW-0963">Cytoplasm</keyword>
<keyword id="KW-0489">Methyltransferase</keyword>
<keyword id="KW-0698">rRNA processing</keyword>
<keyword id="KW-0949">S-adenosyl-L-methionine</keyword>
<keyword id="KW-0808">Transferase</keyword>
<gene>
    <name evidence="1" type="primary">rsmG</name>
    <name type="ordered locus">COXBURSA331_A2126</name>
</gene>
<sequence>MTEKLKQGIDQLGLKVAETIQQSMLAFLAFLQKWNQAYNLTAITEIKSMITHHLLDSLSILPYLKGDKILDVGSGAGFPGIPLAFACPEKKFTLIDSKAKKTAFLLQAASRFKITNVTIIQERVGSYQPGFYFDTITCRALGSVREIMEQTNHLLRSGGQWLIMKGAYPEKELRGTDASAIVHVLNVPGLKAERHLVEVKNNKG</sequence>
<evidence type="ECO:0000255" key="1">
    <source>
        <dbReference type="HAMAP-Rule" id="MF_00074"/>
    </source>
</evidence>
<organism>
    <name type="scientific">Coxiella burnetii (strain RSA 331 / Henzerling II)</name>
    <dbReference type="NCBI Taxonomy" id="360115"/>
    <lineage>
        <taxon>Bacteria</taxon>
        <taxon>Pseudomonadati</taxon>
        <taxon>Pseudomonadota</taxon>
        <taxon>Gammaproteobacteria</taxon>
        <taxon>Legionellales</taxon>
        <taxon>Coxiellaceae</taxon>
        <taxon>Coxiella</taxon>
    </lineage>
</organism>
<proteinExistence type="inferred from homology"/>
<feature type="chain" id="PRO_1000075220" description="Ribosomal RNA small subunit methyltransferase G">
    <location>
        <begin position="1"/>
        <end position="204"/>
    </location>
</feature>
<feature type="binding site" evidence="1">
    <location>
        <position position="73"/>
    </location>
    <ligand>
        <name>S-adenosyl-L-methionine</name>
        <dbReference type="ChEBI" id="CHEBI:59789"/>
    </ligand>
</feature>
<feature type="binding site" evidence="1">
    <location>
        <position position="78"/>
    </location>
    <ligand>
        <name>S-adenosyl-L-methionine</name>
        <dbReference type="ChEBI" id="CHEBI:59789"/>
    </ligand>
</feature>
<feature type="binding site" evidence="1">
    <location>
        <position position="139"/>
    </location>
    <ligand>
        <name>S-adenosyl-L-methionine</name>
        <dbReference type="ChEBI" id="CHEBI:59789"/>
    </ligand>
</feature>
<reference key="1">
    <citation type="submission" date="2007-11" db="EMBL/GenBank/DDBJ databases">
        <title>Genome sequencing of phylogenetically and phenotypically diverse Coxiella burnetii isolates.</title>
        <authorList>
            <person name="Seshadri R."/>
            <person name="Samuel J.E."/>
        </authorList>
    </citation>
    <scope>NUCLEOTIDE SEQUENCE [LARGE SCALE GENOMIC DNA]</scope>
    <source>
        <strain>RSA 331 / Henzerling II</strain>
    </source>
</reference>